<feature type="chain" id="PRO_0000168193" description="RH-like protein">
    <location>
        <begin position="1"/>
        <end position="354"/>
    </location>
</feature>
<feature type="transmembrane region" description="Helical" evidence="1">
    <location>
        <begin position="11"/>
        <end position="31"/>
    </location>
</feature>
<feature type="transmembrane region" description="Helical" evidence="1">
    <location>
        <begin position="45"/>
        <end position="65"/>
    </location>
</feature>
<feature type="transmembrane region" description="Helical" evidence="1">
    <location>
        <begin position="77"/>
        <end position="97"/>
    </location>
</feature>
<feature type="transmembrane region" description="Helical" evidence="1">
    <location>
        <begin position="125"/>
        <end position="145"/>
    </location>
</feature>
<feature type="transmembrane region" description="Helical" evidence="1">
    <location>
        <begin position="167"/>
        <end position="187"/>
    </location>
</feature>
<feature type="transmembrane region" description="Helical" evidence="1">
    <location>
        <begin position="209"/>
        <end position="229"/>
    </location>
</feature>
<feature type="transmembrane region" description="Helical" evidence="1">
    <location>
        <begin position="238"/>
        <end position="258"/>
    </location>
</feature>
<feature type="transmembrane region" description="Helical" evidence="1">
    <location>
        <begin position="287"/>
        <end position="307"/>
    </location>
</feature>
<evidence type="ECO:0000255" key="1"/>
<evidence type="ECO:0000305" key="2"/>
<organism>
    <name type="scientific">Hylobates pileatus</name>
    <name type="common">Pileated gibbon</name>
    <dbReference type="NCBI Taxonomy" id="9589"/>
    <lineage>
        <taxon>Eukaryota</taxon>
        <taxon>Metazoa</taxon>
        <taxon>Chordata</taxon>
        <taxon>Craniata</taxon>
        <taxon>Vertebrata</taxon>
        <taxon>Euteleostomi</taxon>
        <taxon>Mammalia</taxon>
        <taxon>Eutheria</taxon>
        <taxon>Euarchontoglires</taxon>
        <taxon>Primates</taxon>
        <taxon>Haplorrhini</taxon>
        <taxon>Catarrhini</taxon>
        <taxon>Hylobatidae</taxon>
        <taxon>Hylobates</taxon>
    </lineage>
</organism>
<proteinExistence type="evidence at transcript level"/>
<comment type="function">
    <text>May be part of an oligomeric complex which is likely to have a transport or channel function in the erythrocyte membrane.</text>
</comment>
<comment type="subcellular location">
    <subcellularLocation>
        <location>Membrane</location>
        <topology>Multi-pass membrane protein</topology>
    </subcellularLocation>
</comment>
<comment type="similarity">
    <text evidence="2">Belongs to the ammonium transporter (TC 2.A.49) family. Rh subfamily.</text>
</comment>
<sequence>MSSKYPRSVRGCLPLWALTLEAALILLFFFFTHYDASLEDQKGLVATYQVGQDLTVMAALGLGFLTSNLRRHSWSSVAFNLFMLALGVQWAILLDGFLSQFPPGKVVIKLLSIRLATMSAMSSLISVGAVLGKVNLVQLVVMVLVELTAFGTMRMVINNIFKTDYHVNIMHIHVFAAYFGLTVAWCLPKPPPEGTEDKEQIANSPSLSAMLGALFLWIFWPSFNSALLTNPIERKNAVFNTYYALAVSTVTAISVSSLAHPQGKINMTYMHNAVLAGGVAVGTSCHLISSPWLAMVLGLVAGLISIGGAKCLPDWLPDPLQHWGTQLGHGDSSHVWFPDRFAPKSQNMESTSCG</sequence>
<protein>
    <recommendedName>
        <fullName>RH-like protein</fullName>
    </recommendedName>
    <alternativeName>
        <fullName>Rhesus-like protein</fullName>
    </alternativeName>
</protein>
<keyword id="KW-0472">Membrane</keyword>
<keyword id="KW-0812">Transmembrane</keyword>
<keyword id="KW-1133">Transmembrane helix</keyword>
<reference key="1">
    <citation type="journal article" date="1994" name="Biochem. Genet.">
        <title>Molecular genetics of chimpanzee Rh-related genes: their relationship with the R-C-E-F blood group system, the chimpanzee counterpart of the human rhesus system.</title>
        <authorList>
            <person name="Salvignol I."/>
            <person name="Blancher A."/>
            <person name="Calvas P."/>
            <person name="Clayton J."/>
            <person name="Socha W.W."/>
            <person name="Colin Y."/>
            <person name="Ruffie J."/>
        </authorList>
    </citation>
    <scope>NUCLEOTIDE SEQUENCE [MRNA]</scope>
    <source>
        <tissue>Bone marrow</tissue>
    </source>
</reference>
<accession>Q28446</accession>
<dbReference type="EMBL" id="L37051">
    <property type="protein sequence ID" value="AAA65625.1"/>
    <property type="molecule type" value="mRNA"/>
</dbReference>
<dbReference type="PIR" id="I37053">
    <property type="entry name" value="I37053"/>
</dbReference>
<dbReference type="SMR" id="Q28446"/>
<dbReference type="GO" id="GO:0005886">
    <property type="term" value="C:plasma membrane"/>
    <property type="evidence" value="ECO:0007669"/>
    <property type="project" value="InterPro"/>
</dbReference>
<dbReference type="GO" id="GO:0008519">
    <property type="term" value="F:ammonium channel activity"/>
    <property type="evidence" value="ECO:0007669"/>
    <property type="project" value="InterPro"/>
</dbReference>
<dbReference type="GO" id="GO:0097272">
    <property type="term" value="P:ammonium homeostasis"/>
    <property type="evidence" value="ECO:0007669"/>
    <property type="project" value="TreeGrafter"/>
</dbReference>
<dbReference type="FunFam" id="1.10.3430.10:FF:000009">
    <property type="entry name" value="Blood group Rh(D) polypeptide"/>
    <property type="match status" value="1"/>
</dbReference>
<dbReference type="Gene3D" id="1.10.3430.10">
    <property type="entry name" value="Ammonium transporter AmtB like domains"/>
    <property type="match status" value="1"/>
</dbReference>
<dbReference type="InterPro" id="IPR029020">
    <property type="entry name" value="Ammonium/urea_transptr"/>
</dbReference>
<dbReference type="InterPro" id="IPR024041">
    <property type="entry name" value="NH4_transpt_AmtB-like_dom"/>
</dbReference>
<dbReference type="InterPro" id="IPR002229">
    <property type="entry name" value="RhesusRHD"/>
</dbReference>
<dbReference type="PANTHER" id="PTHR11730">
    <property type="entry name" value="AMMONIUM TRANSPORTER"/>
    <property type="match status" value="1"/>
</dbReference>
<dbReference type="PANTHER" id="PTHR11730:SF43">
    <property type="entry name" value="BLOOD GROUP RH(CE) POLYPEPTIDE-RELATED"/>
    <property type="match status" value="1"/>
</dbReference>
<dbReference type="Pfam" id="PF00909">
    <property type="entry name" value="Ammonium_transp"/>
    <property type="match status" value="1"/>
</dbReference>
<dbReference type="PRINTS" id="PR00342">
    <property type="entry name" value="RHESUSRHD"/>
</dbReference>
<dbReference type="SUPFAM" id="SSF111352">
    <property type="entry name" value="Ammonium transporter"/>
    <property type="match status" value="1"/>
</dbReference>
<name>RHL_HYLPI</name>